<organism>
    <name type="scientific">Paenarthrobacter nicotinovorans</name>
    <name type="common">Arthrobacter nicotinovorans</name>
    <dbReference type="NCBI Taxonomy" id="29320"/>
    <lineage>
        <taxon>Bacteria</taxon>
        <taxon>Bacillati</taxon>
        <taxon>Actinomycetota</taxon>
        <taxon>Actinomycetes</taxon>
        <taxon>Micrococcales</taxon>
        <taxon>Micrococcaceae</taxon>
        <taxon>Paenarthrobacter</taxon>
    </lineage>
</organism>
<comment type="function">
    <text evidence="2">Catalyzes the conversion of 2-oxoglutaramate to 2-oxoglutarate. Together with glutamate dehydrogenase, may form a physiologically relevant enzyme couple, leading to transformation of metabolically inert 2-oxoglutaramate derived from trihydroxypyridine into glutamate, a central compound of nitrogen metabolism.</text>
</comment>
<comment type="catalytic activity">
    <reaction evidence="2">
        <text>2-oxoglutaramate + H2O = 2-oxoglutarate + NH4(+)</text>
        <dbReference type="Rhea" id="RHEA:32963"/>
        <dbReference type="ChEBI" id="CHEBI:15377"/>
        <dbReference type="ChEBI" id="CHEBI:16769"/>
        <dbReference type="ChEBI" id="CHEBI:16810"/>
        <dbReference type="ChEBI" id="CHEBI:28938"/>
        <dbReference type="EC" id="3.5.1.111"/>
    </reaction>
</comment>
<comment type="pathway">
    <text>Alkaloid degradation; nicotine degradation.</text>
</comment>
<comment type="similarity">
    <text evidence="3">Belongs to the carbon-nitrogen hydrolase superfamily. NIT1/NIT2 family.</text>
</comment>
<feature type="chain" id="PRO_0000424219" description="2-oxoglutaramate amidase">
    <location>
        <begin position="1"/>
        <end position="294"/>
    </location>
</feature>
<feature type="domain" description="CN hydrolase" evidence="1">
    <location>
        <begin position="16"/>
        <end position="261"/>
    </location>
</feature>
<feature type="active site" description="Proton acceptor" evidence="1">
    <location>
        <position position="55"/>
    </location>
</feature>
<feature type="active site" description="Proton donor" evidence="1">
    <location>
        <position position="129"/>
    </location>
</feature>
<feature type="active site" description="Nucleophile" evidence="1">
    <location>
        <position position="168"/>
    </location>
</feature>
<reference key="1">
    <citation type="journal article" date="2001" name="J. Bacteriol.">
        <title>Gene cluster on pAO1 of Arthrobacter nicotinovorans involved in degradation of the plant alkaloid nicotine: cloning, purification, and characterization of 2,6-dihydroxypyridine 3-hydroxylase.</title>
        <authorList>
            <person name="Baitsch D."/>
            <person name="Sandu C."/>
            <person name="Brandsch R."/>
            <person name="Igloi G.L."/>
        </authorList>
    </citation>
    <scope>NUCLEOTIDE SEQUENCE [GENOMIC DNA]</scope>
</reference>
<reference key="2">
    <citation type="journal article" date="2003" name="J. Bacteriol.">
        <title>Sequence of the 165-kilobase catabolic plasmid pAO1 from Arthrobacter nicotinovorans and identification of a pAO1-dependent nicotine uptake system.</title>
        <authorList>
            <person name="Igloi G.L."/>
            <person name="Brandsch R."/>
        </authorList>
    </citation>
    <scope>NUCLEOTIDE SEQUENCE [GENOMIC DNA]</scope>
</reference>
<reference key="3">
    <citation type="journal article" date="2011" name="Res. Microbiol.">
        <title>Homologous gene clusters of nicotine catabolism, including a new omega-amidase for alpha-ketoglutaramate, in species of three genera of Gram-positive bacteria.</title>
        <authorList>
            <person name="Cobzaru C."/>
            <person name="Ganas P."/>
            <person name="Mihasan M."/>
            <person name="Schleberger P."/>
            <person name="Brandsch R."/>
        </authorList>
    </citation>
    <scope>FUNCTION</scope>
    <scope>CATALYTIC ACTIVITY</scope>
</reference>
<name>NIT_PAENI</name>
<keyword id="KW-0378">Hydrolase</keyword>
<keyword id="KW-0614">Plasmid</keyword>
<sequence length="294" mass="32665">MNLMEVRELAPSRGQLDVAAVQVKFDSTELLEDRISRIQDLVSGVGKADLIVLPELWLHGGFSYDSWRKNAISLESEVFTFLSEVARDKKAWFHAGSFMVTEPSSAASDMWNTSVLFDPTGSLRATYKKIHRFGFSDGEPKLIAAGDEPRVVELQTERATAITGLSTCYDLRFPELYRHISAEGTALNVIPACWPLTRIQHWQTLGRARAIENQSFVVQCNMTGVDQEVELGGHSQIVDGNGDILAQADKEEAVLRATLNFDSLNELRSSFPVLNDRRADIWAAKGKTVIASHL</sequence>
<protein>
    <recommendedName>
        <fullName>2-oxoglutaramate amidase</fullName>
        <ecNumber evidence="2">3.5.1.111</ecNumber>
    </recommendedName>
    <alternativeName>
        <fullName>Omega-amidase</fullName>
    </alternativeName>
</protein>
<dbReference type="EC" id="3.5.1.111" evidence="2"/>
<dbReference type="EMBL" id="AF373840">
    <property type="protein sequence ID" value="AAK64257.1"/>
    <property type="molecule type" value="Genomic_DNA"/>
</dbReference>
<dbReference type="EMBL" id="AJ507836">
    <property type="protein sequence ID" value="CAD47935.1"/>
    <property type="molecule type" value="Genomic_DNA"/>
</dbReference>
<dbReference type="RefSeq" id="YP_007988761.1">
    <property type="nucleotide sequence ID" value="NC_021229.1"/>
</dbReference>
<dbReference type="SMR" id="Q93NG1"/>
<dbReference type="KEGG" id="ag:CAD47935"/>
<dbReference type="BioCyc" id="MetaCyc:MONOMER-17151"/>
<dbReference type="BRENDA" id="3.5.1.111">
    <property type="organism ID" value="449"/>
</dbReference>
<dbReference type="UniPathway" id="UPA00106"/>
<dbReference type="GO" id="GO:0106008">
    <property type="term" value="F:2-oxoglutaramate amidase activity"/>
    <property type="evidence" value="ECO:0007669"/>
    <property type="project" value="UniProtKB-EC"/>
</dbReference>
<dbReference type="GO" id="GO:0019608">
    <property type="term" value="P:nicotine catabolic process"/>
    <property type="evidence" value="ECO:0007669"/>
    <property type="project" value="UniProtKB-UniPathway"/>
</dbReference>
<dbReference type="CDD" id="cd07583">
    <property type="entry name" value="nitrilase_5"/>
    <property type="match status" value="1"/>
</dbReference>
<dbReference type="Gene3D" id="3.60.110.10">
    <property type="entry name" value="Carbon-nitrogen hydrolase"/>
    <property type="match status" value="1"/>
</dbReference>
<dbReference type="InterPro" id="IPR003010">
    <property type="entry name" value="C-N_Hydrolase"/>
</dbReference>
<dbReference type="InterPro" id="IPR036526">
    <property type="entry name" value="C-N_Hydrolase_sf"/>
</dbReference>
<dbReference type="InterPro" id="IPR001110">
    <property type="entry name" value="UPF0012_CS"/>
</dbReference>
<dbReference type="PANTHER" id="PTHR23088:SF27">
    <property type="entry name" value="DEAMINATED GLUTATHIONE AMIDASE"/>
    <property type="match status" value="1"/>
</dbReference>
<dbReference type="PANTHER" id="PTHR23088">
    <property type="entry name" value="NITRILASE-RELATED"/>
    <property type="match status" value="1"/>
</dbReference>
<dbReference type="Pfam" id="PF00795">
    <property type="entry name" value="CN_hydrolase"/>
    <property type="match status" value="1"/>
</dbReference>
<dbReference type="SUPFAM" id="SSF56317">
    <property type="entry name" value="Carbon-nitrogen hydrolase"/>
    <property type="match status" value="1"/>
</dbReference>
<dbReference type="PROSITE" id="PS50263">
    <property type="entry name" value="CN_HYDROLASE"/>
    <property type="match status" value="1"/>
</dbReference>
<dbReference type="PROSITE" id="PS01227">
    <property type="entry name" value="UPF0012"/>
    <property type="match status" value="1"/>
</dbReference>
<accession>Q93NG1</accession>
<proteinExistence type="evidence at protein level"/>
<geneLocation type="plasmid">
    <name>pAO1</name>
</geneLocation>
<evidence type="ECO:0000255" key="1">
    <source>
        <dbReference type="PROSITE-ProRule" id="PRU00054"/>
    </source>
</evidence>
<evidence type="ECO:0000269" key="2">
    <source>
    </source>
</evidence>
<evidence type="ECO:0000305" key="3"/>